<name>SPC2_SCHPO</name>
<evidence type="ECO:0000250" key="1">
    <source>
        <dbReference type="UniProtKB" id="P67812"/>
    </source>
</evidence>
<evidence type="ECO:0000250" key="2">
    <source>
        <dbReference type="UniProtKB" id="Q04969"/>
    </source>
</evidence>
<evidence type="ECO:0000255" key="3"/>
<evidence type="ECO:0000269" key="4">
    <source>
    </source>
</evidence>
<evidence type="ECO:0000305" key="5"/>
<comment type="function">
    <text evidence="2">Component of the signal peptidase complex (SPC) which catalyzes the cleavage of N-terminal signal sequences from nascent proteins as they are translocated into the lumen of the endoplasmic reticulum. Enhances the enzymatic activity of SPC and facilitates the interactions between different components of the translocation site.</text>
</comment>
<comment type="subunit">
    <text evidence="1 2">Component of the signal peptidase complex (SPC) composed of a catalytic subunit sec11 and three accessory subunits spc1, spc2 and spc3 (By similarity). The complex induces a local thinning of the ER membrane which is used to measure the length of the signal peptide (SP) h-region of protein substrates. This ensures the selectivity of the complex towards h-regions shorter than 18-20 amino acids (By similarity). SPC associates with the translocon complex (By similarity).</text>
</comment>
<comment type="subcellular location">
    <subcellularLocation>
        <location evidence="4">Endoplasmic reticulum membrane</location>
        <topology evidence="4">Multi-pass membrane protein</topology>
    </subcellularLocation>
</comment>
<comment type="similarity">
    <text evidence="5">Belongs to the SPCS2 family.</text>
</comment>
<gene>
    <name type="primary">spc2</name>
    <name type="ORF">SPAC1071.04c</name>
</gene>
<proteinExistence type="inferred from homology"/>
<reference key="1">
    <citation type="journal article" date="2002" name="Nature">
        <title>The genome sequence of Schizosaccharomyces pombe.</title>
        <authorList>
            <person name="Wood V."/>
            <person name="Gwilliam R."/>
            <person name="Rajandream M.A."/>
            <person name="Lyne M.H."/>
            <person name="Lyne R."/>
            <person name="Stewart A."/>
            <person name="Sgouros J.G."/>
            <person name="Peat N."/>
            <person name="Hayles J."/>
            <person name="Baker S.G."/>
            <person name="Basham D."/>
            <person name="Bowman S."/>
            <person name="Brooks K."/>
            <person name="Brown D."/>
            <person name="Brown S."/>
            <person name="Chillingworth T."/>
            <person name="Churcher C.M."/>
            <person name="Collins M."/>
            <person name="Connor R."/>
            <person name="Cronin A."/>
            <person name="Davis P."/>
            <person name="Feltwell T."/>
            <person name="Fraser A."/>
            <person name="Gentles S."/>
            <person name="Goble A."/>
            <person name="Hamlin N."/>
            <person name="Harris D.E."/>
            <person name="Hidalgo J."/>
            <person name="Hodgson G."/>
            <person name="Holroyd S."/>
            <person name="Hornsby T."/>
            <person name="Howarth S."/>
            <person name="Huckle E.J."/>
            <person name="Hunt S."/>
            <person name="Jagels K."/>
            <person name="James K.D."/>
            <person name="Jones L."/>
            <person name="Jones M."/>
            <person name="Leather S."/>
            <person name="McDonald S."/>
            <person name="McLean J."/>
            <person name="Mooney P."/>
            <person name="Moule S."/>
            <person name="Mungall K.L."/>
            <person name="Murphy L.D."/>
            <person name="Niblett D."/>
            <person name="Odell C."/>
            <person name="Oliver K."/>
            <person name="O'Neil S."/>
            <person name="Pearson D."/>
            <person name="Quail M.A."/>
            <person name="Rabbinowitsch E."/>
            <person name="Rutherford K.M."/>
            <person name="Rutter S."/>
            <person name="Saunders D."/>
            <person name="Seeger K."/>
            <person name="Sharp S."/>
            <person name="Skelton J."/>
            <person name="Simmonds M.N."/>
            <person name="Squares R."/>
            <person name="Squares S."/>
            <person name="Stevens K."/>
            <person name="Taylor K."/>
            <person name="Taylor R.G."/>
            <person name="Tivey A."/>
            <person name="Walsh S.V."/>
            <person name="Warren T."/>
            <person name="Whitehead S."/>
            <person name="Woodward J.R."/>
            <person name="Volckaert G."/>
            <person name="Aert R."/>
            <person name="Robben J."/>
            <person name="Grymonprez B."/>
            <person name="Weltjens I."/>
            <person name="Vanstreels E."/>
            <person name="Rieger M."/>
            <person name="Schaefer M."/>
            <person name="Mueller-Auer S."/>
            <person name="Gabel C."/>
            <person name="Fuchs M."/>
            <person name="Duesterhoeft A."/>
            <person name="Fritzc C."/>
            <person name="Holzer E."/>
            <person name="Moestl D."/>
            <person name="Hilbert H."/>
            <person name="Borzym K."/>
            <person name="Langer I."/>
            <person name="Beck A."/>
            <person name="Lehrach H."/>
            <person name="Reinhardt R."/>
            <person name="Pohl T.M."/>
            <person name="Eger P."/>
            <person name="Zimmermann W."/>
            <person name="Wedler H."/>
            <person name="Wambutt R."/>
            <person name="Purnelle B."/>
            <person name="Goffeau A."/>
            <person name="Cadieu E."/>
            <person name="Dreano S."/>
            <person name="Gloux S."/>
            <person name="Lelaure V."/>
            <person name="Mottier S."/>
            <person name="Galibert F."/>
            <person name="Aves S.J."/>
            <person name="Xiang Z."/>
            <person name="Hunt C."/>
            <person name="Moore K."/>
            <person name="Hurst S.M."/>
            <person name="Lucas M."/>
            <person name="Rochet M."/>
            <person name="Gaillardin C."/>
            <person name="Tallada V.A."/>
            <person name="Garzon A."/>
            <person name="Thode G."/>
            <person name="Daga R.R."/>
            <person name="Cruzado L."/>
            <person name="Jimenez J."/>
            <person name="Sanchez M."/>
            <person name="del Rey F."/>
            <person name="Benito J."/>
            <person name="Dominguez A."/>
            <person name="Revuelta J.L."/>
            <person name="Moreno S."/>
            <person name="Armstrong J."/>
            <person name="Forsburg S.L."/>
            <person name="Cerutti L."/>
            <person name="Lowe T."/>
            <person name="McCombie W.R."/>
            <person name="Paulsen I."/>
            <person name="Potashkin J."/>
            <person name="Shpakovski G.V."/>
            <person name="Ussery D."/>
            <person name="Barrell B.G."/>
            <person name="Nurse P."/>
        </authorList>
    </citation>
    <scope>NUCLEOTIDE SEQUENCE [LARGE SCALE GENOMIC DNA]</scope>
    <source>
        <strain>972 / ATCC 24843</strain>
    </source>
</reference>
<reference key="2">
    <citation type="journal article" date="2006" name="Nat. Biotechnol.">
        <title>ORFeome cloning and global analysis of protein localization in the fission yeast Schizosaccharomyces pombe.</title>
        <authorList>
            <person name="Matsuyama A."/>
            <person name="Arai R."/>
            <person name="Yashiroda Y."/>
            <person name="Shirai A."/>
            <person name="Kamata A."/>
            <person name="Sekido S."/>
            <person name="Kobayashi Y."/>
            <person name="Hashimoto A."/>
            <person name="Hamamoto M."/>
            <person name="Hiraoka Y."/>
            <person name="Horinouchi S."/>
            <person name="Yoshida M."/>
        </authorList>
    </citation>
    <scope>SUBCELLULAR LOCATION [LARGE SCALE ANALYSIS]</scope>
</reference>
<dbReference type="EMBL" id="CU329670">
    <property type="protein sequence ID" value="CAB59880.1"/>
    <property type="molecule type" value="Genomic_DNA"/>
</dbReference>
<dbReference type="PIR" id="T37486">
    <property type="entry name" value="T37486"/>
</dbReference>
<dbReference type="RefSeq" id="NP_594354.1">
    <property type="nucleotide sequence ID" value="NM_001019775.1"/>
</dbReference>
<dbReference type="SMR" id="Q9UTQ9"/>
<dbReference type="BioGRID" id="278190">
    <property type="interactions" value="26"/>
</dbReference>
<dbReference type="FunCoup" id="Q9UTQ9">
    <property type="interactions" value="76"/>
</dbReference>
<dbReference type="STRING" id="284812.Q9UTQ9"/>
<dbReference type="iPTMnet" id="Q9UTQ9"/>
<dbReference type="PaxDb" id="4896-SPAC1071.04c.1"/>
<dbReference type="EnsemblFungi" id="SPAC1071.04c.1">
    <property type="protein sequence ID" value="SPAC1071.04c.1:pep"/>
    <property type="gene ID" value="SPAC1071.04c"/>
</dbReference>
<dbReference type="GeneID" id="2541694"/>
<dbReference type="KEGG" id="spo:2541694"/>
<dbReference type="PomBase" id="SPAC1071.04c">
    <property type="gene designation" value="spc2"/>
</dbReference>
<dbReference type="VEuPathDB" id="FungiDB:SPAC1071.04c"/>
<dbReference type="HOGENOM" id="CLU_1595504_0_0_1"/>
<dbReference type="InParanoid" id="Q9UTQ9"/>
<dbReference type="OMA" id="LLTWWIS"/>
<dbReference type="PhylomeDB" id="Q9UTQ9"/>
<dbReference type="PRO" id="PR:Q9UTQ9"/>
<dbReference type="Proteomes" id="UP000002485">
    <property type="component" value="Chromosome I"/>
</dbReference>
<dbReference type="GO" id="GO:0005783">
    <property type="term" value="C:endoplasmic reticulum"/>
    <property type="evidence" value="ECO:0007005"/>
    <property type="project" value="PomBase"/>
</dbReference>
<dbReference type="GO" id="GO:0005787">
    <property type="term" value="C:signal peptidase complex"/>
    <property type="evidence" value="ECO:0000318"/>
    <property type="project" value="GO_Central"/>
</dbReference>
<dbReference type="GO" id="GO:0045047">
    <property type="term" value="P:protein targeting to ER"/>
    <property type="evidence" value="ECO:0000318"/>
    <property type="project" value="GO_Central"/>
</dbReference>
<dbReference type="GO" id="GO:0006465">
    <property type="term" value="P:signal peptide processing"/>
    <property type="evidence" value="ECO:0000318"/>
    <property type="project" value="GO_Central"/>
</dbReference>
<dbReference type="InterPro" id="IPR009582">
    <property type="entry name" value="Spc2/SPCS2"/>
</dbReference>
<dbReference type="PANTHER" id="PTHR13085">
    <property type="entry name" value="MICROSOMAL SIGNAL PEPTIDASE 25 KDA SUBUNIT"/>
    <property type="match status" value="1"/>
</dbReference>
<dbReference type="PANTHER" id="PTHR13085:SF0">
    <property type="entry name" value="SIGNAL PEPTIDASE COMPLEX SUBUNIT 2"/>
    <property type="match status" value="1"/>
</dbReference>
<dbReference type="Pfam" id="PF06703">
    <property type="entry name" value="SPC25"/>
    <property type="match status" value="1"/>
</dbReference>
<organism>
    <name type="scientific">Schizosaccharomyces pombe (strain 972 / ATCC 24843)</name>
    <name type="common">Fission yeast</name>
    <dbReference type="NCBI Taxonomy" id="284812"/>
    <lineage>
        <taxon>Eukaryota</taxon>
        <taxon>Fungi</taxon>
        <taxon>Dikarya</taxon>
        <taxon>Ascomycota</taxon>
        <taxon>Taphrinomycotina</taxon>
        <taxon>Schizosaccharomycetes</taxon>
        <taxon>Schizosaccharomycetales</taxon>
        <taxon>Schizosaccharomycetaceae</taxon>
        <taxon>Schizosaccharomyces</taxon>
    </lineage>
</organism>
<keyword id="KW-0256">Endoplasmic reticulum</keyword>
<keyword id="KW-0472">Membrane</keyword>
<keyword id="KW-1185">Reference proteome</keyword>
<keyword id="KW-0812">Transmembrane</keyword>
<keyword id="KW-1133">Transmembrane helix</keyword>
<protein>
    <recommendedName>
        <fullName>Signal peptidase complex subunit 2</fullName>
    </recommendedName>
    <alternativeName>
        <fullName>Microsomal signal peptidase subunit 2</fullName>
    </alternativeName>
</protein>
<sequence>MPKYNVSDFKSKFDKELTNHFNKNGYKQSFVFEDIRLLIAIACIIPAGLAFGIEYVYGFGVLKSYLKYLLPLYFLASCLLTFWSSVVKGSTVYVATKKERHIKISADTFLPLKNKPLITTKFTVLKNRNAVQLEWSVPVAHIFEEDGQISSATFEAEISKYLSQIEN</sequence>
<accession>Q9UTQ9</accession>
<feature type="chain" id="PRO_0000362161" description="Signal peptidase complex subunit 2">
    <location>
        <begin position="1"/>
        <end position="167"/>
    </location>
</feature>
<feature type="topological domain" description="Cytoplasmic" evidence="3">
    <location>
        <begin position="1"/>
        <end position="36"/>
    </location>
</feature>
<feature type="transmembrane region" description="Helical" evidence="3">
    <location>
        <begin position="37"/>
        <end position="57"/>
    </location>
</feature>
<feature type="topological domain" description="Lumenal" evidence="3">
    <location>
        <begin position="58"/>
        <end position="68"/>
    </location>
</feature>
<feature type="transmembrane region" description="Helical" evidence="3">
    <location>
        <begin position="69"/>
        <end position="89"/>
    </location>
</feature>
<feature type="topological domain" description="Cytoplasmic" evidence="3">
    <location>
        <begin position="90"/>
        <end position="167"/>
    </location>
</feature>